<organism>
    <name type="scientific">Arabidopsis thaliana</name>
    <name type="common">Mouse-ear cress</name>
    <dbReference type="NCBI Taxonomy" id="3702"/>
    <lineage>
        <taxon>Eukaryota</taxon>
        <taxon>Viridiplantae</taxon>
        <taxon>Streptophyta</taxon>
        <taxon>Embryophyta</taxon>
        <taxon>Tracheophyta</taxon>
        <taxon>Spermatophyta</taxon>
        <taxon>Magnoliopsida</taxon>
        <taxon>eudicotyledons</taxon>
        <taxon>Gunneridae</taxon>
        <taxon>Pentapetalae</taxon>
        <taxon>rosids</taxon>
        <taxon>malvids</taxon>
        <taxon>Brassicales</taxon>
        <taxon>Brassicaceae</taxon>
        <taxon>Camelineae</taxon>
        <taxon>Arabidopsis</taxon>
    </lineage>
</organism>
<proteinExistence type="evidence at protein level"/>
<accession>Q93Z70</accession>
<accession>O82187</accession>
<reference key="1">
    <citation type="journal article" date="1999" name="Nature">
        <title>Sequence and analysis of chromosome 2 of the plant Arabidopsis thaliana.</title>
        <authorList>
            <person name="Lin X."/>
            <person name="Kaul S."/>
            <person name="Rounsley S.D."/>
            <person name="Shea T.P."/>
            <person name="Benito M.-I."/>
            <person name="Town C.D."/>
            <person name="Fujii C.Y."/>
            <person name="Mason T.M."/>
            <person name="Bowman C.L."/>
            <person name="Barnstead M.E."/>
            <person name="Feldblyum T.V."/>
            <person name="Buell C.R."/>
            <person name="Ketchum K.A."/>
            <person name="Lee J.J."/>
            <person name="Ronning C.M."/>
            <person name="Koo H.L."/>
            <person name="Moffat K.S."/>
            <person name="Cronin L.A."/>
            <person name="Shen M."/>
            <person name="Pai G."/>
            <person name="Van Aken S."/>
            <person name="Umayam L."/>
            <person name="Tallon L.J."/>
            <person name="Gill J.E."/>
            <person name="Adams M.D."/>
            <person name="Carrera A.J."/>
            <person name="Creasy T.H."/>
            <person name="Goodman H.M."/>
            <person name="Somerville C.R."/>
            <person name="Copenhaver G.P."/>
            <person name="Preuss D."/>
            <person name="Nierman W.C."/>
            <person name="White O."/>
            <person name="Eisen J.A."/>
            <person name="Salzberg S.L."/>
            <person name="Fraser C.M."/>
            <person name="Venter J.C."/>
        </authorList>
    </citation>
    <scope>NUCLEOTIDE SEQUENCE [LARGE SCALE GENOMIC DNA]</scope>
    <source>
        <strain>cv. Columbia</strain>
    </source>
</reference>
<reference key="2">
    <citation type="journal article" date="2017" name="Plant J.">
        <title>Araport11: a complete reannotation of the Arabidopsis thaliana reference genome.</title>
        <authorList>
            <person name="Cheng C.Y."/>
            <person name="Krishnakumar V."/>
            <person name="Chan A.P."/>
            <person name="Thibaud-Nissen F."/>
            <person name="Schobel S."/>
            <person name="Town C.D."/>
        </authorList>
    </citation>
    <scope>GENOME REANNOTATION</scope>
    <source>
        <strain>cv. Columbia</strain>
    </source>
</reference>
<reference key="3">
    <citation type="journal article" date="2003" name="Science">
        <title>Empirical analysis of transcriptional activity in the Arabidopsis genome.</title>
        <authorList>
            <person name="Yamada K."/>
            <person name="Lim J."/>
            <person name="Dale J.M."/>
            <person name="Chen H."/>
            <person name="Shinn P."/>
            <person name="Palm C.J."/>
            <person name="Southwick A.M."/>
            <person name="Wu H.C."/>
            <person name="Kim C.J."/>
            <person name="Nguyen M."/>
            <person name="Pham P.K."/>
            <person name="Cheuk R.F."/>
            <person name="Karlin-Newmann G."/>
            <person name="Liu S.X."/>
            <person name="Lam B."/>
            <person name="Sakano H."/>
            <person name="Wu T."/>
            <person name="Yu G."/>
            <person name="Miranda M."/>
            <person name="Quach H.L."/>
            <person name="Tripp M."/>
            <person name="Chang C.H."/>
            <person name="Lee J.M."/>
            <person name="Toriumi M.J."/>
            <person name="Chan M.M."/>
            <person name="Tang C.C."/>
            <person name="Onodera C.S."/>
            <person name="Deng J.M."/>
            <person name="Akiyama K."/>
            <person name="Ansari Y."/>
            <person name="Arakawa T."/>
            <person name="Banh J."/>
            <person name="Banno F."/>
            <person name="Bowser L."/>
            <person name="Brooks S.Y."/>
            <person name="Carninci P."/>
            <person name="Chao Q."/>
            <person name="Choy N."/>
            <person name="Enju A."/>
            <person name="Goldsmith A.D."/>
            <person name="Gurjal M."/>
            <person name="Hansen N.F."/>
            <person name="Hayashizaki Y."/>
            <person name="Johnson-Hopson C."/>
            <person name="Hsuan V.W."/>
            <person name="Iida K."/>
            <person name="Karnes M."/>
            <person name="Khan S."/>
            <person name="Koesema E."/>
            <person name="Ishida J."/>
            <person name="Jiang P.X."/>
            <person name="Jones T."/>
            <person name="Kawai J."/>
            <person name="Kamiya A."/>
            <person name="Meyers C."/>
            <person name="Nakajima M."/>
            <person name="Narusaka M."/>
            <person name="Seki M."/>
            <person name="Sakurai T."/>
            <person name="Satou M."/>
            <person name="Tamse R."/>
            <person name="Vaysberg M."/>
            <person name="Wallender E.K."/>
            <person name="Wong C."/>
            <person name="Yamamura Y."/>
            <person name="Yuan S."/>
            <person name="Shinozaki K."/>
            <person name="Davis R.W."/>
            <person name="Theologis A."/>
            <person name="Ecker J.R."/>
        </authorList>
    </citation>
    <scope>NUCLEOTIDE SEQUENCE [LARGE SCALE MRNA]</scope>
    <source>
        <strain>cv. Columbia</strain>
    </source>
</reference>
<reference key="4">
    <citation type="submission" date="2005-02" db="PDB data bank">
        <title>X-ray structure of gene product from Arabidopsis thaliana At2g19940.</title>
        <authorList>
            <consortium name="Center for eukaryotic structural genomics (CESG)"/>
        </authorList>
    </citation>
    <scope>X-RAY CRYSTALLOGRAPHY (2.19 ANGSTROMS) OF 43-401</scope>
    <scope>SUBUNIT</scope>
</reference>
<name>ARGC_ARATH</name>
<evidence type="ECO:0000250" key="1"/>
<evidence type="ECO:0000255" key="2"/>
<evidence type="ECO:0000269" key="3">
    <source ref="4"/>
</evidence>
<evidence type="ECO:0000305" key="4"/>
<evidence type="ECO:0007829" key="5">
    <source>
        <dbReference type="PDB" id="1XYG"/>
    </source>
</evidence>
<gene>
    <name type="ordered locus">At2g19940</name>
    <name type="ORF">F6F22.3</name>
</gene>
<dbReference type="EC" id="1.2.1.38"/>
<dbReference type="EMBL" id="AC005169">
    <property type="protein sequence ID" value="AAC62122.2"/>
    <property type="status" value="ALT_SEQ"/>
    <property type="molecule type" value="Genomic_DNA"/>
</dbReference>
<dbReference type="EMBL" id="CP002685">
    <property type="protein sequence ID" value="AEC06946.2"/>
    <property type="molecule type" value="Genomic_DNA"/>
</dbReference>
<dbReference type="EMBL" id="AY058082">
    <property type="protein sequence ID" value="AAL24190.1"/>
    <property type="molecule type" value="mRNA"/>
</dbReference>
<dbReference type="EMBL" id="AY090309">
    <property type="protein sequence ID" value="AAL90970.1"/>
    <property type="molecule type" value="mRNA"/>
</dbReference>
<dbReference type="PIR" id="A84583">
    <property type="entry name" value="A84583"/>
</dbReference>
<dbReference type="RefSeq" id="NP_849993.5">
    <property type="nucleotide sequence ID" value="NM_179662.6"/>
</dbReference>
<dbReference type="PDB" id="1XYG">
    <property type="method" value="X-ray"/>
    <property type="resolution" value="2.19 A"/>
    <property type="chains" value="A/B/C/D=43-401"/>
</dbReference>
<dbReference type="PDB" id="2Q49">
    <property type="method" value="X-ray"/>
    <property type="resolution" value="2.19 A"/>
    <property type="chains" value="A/B/C/D=43-401"/>
</dbReference>
<dbReference type="PDBsum" id="1XYG"/>
<dbReference type="PDBsum" id="2Q49"/>
<dbReference type="SMR" id="Q93Z70"/>
<dbReference type="BioGRID" id="1868">
    <property type="interactions" value="7"/>
</dbReference>
<dbReference type="FunCoup" id="Q93Z70">
    <property type="interactions" value="262"/>
</dbReference>
<dbReference type="IntAct" id="Q93Z70">
    <property type="interactions" value="1"/>
</dbReference>
<dbReference type="STRING" id="3702.Q93Z70"/>
<dbReference type="PaxDb" id="3702-AT2G19940.2"/>
<dbReference type="ProteomicsDB" id="244446"/>
<dbReference type="DNASU" id="816513"/>
<dbReference type="GeneID" id="816513"/>
<dbReference type="KEGG" id="ath:AT2G19940"/>
<dbReference type="Araport" id="AT2G19940"/>
<dbReference type="TAIR" id="AT2G19940"/>
<dbReference type="eggNOG" id="KOG4354">
    <property type="taxonomic scope" value="Eukaryota"/>
</dbReference>
<dbReference type="HOGENOM" id="CLU_688090_0_0_1"/>
<dbReference type="InParanoid" id="Q93Z70"/>
<dbReference type="OrthoDB" id="438291at2759"/>
<dbReference type="PhylomeDB" id="Q93Z70"/>
<dbReference type="UniPathway" id="UPA00068">
    <property type="reaction ID" value="UER00108"/>
</dbReference>
<dbReference type="CD-CODE" id="4299E36E">
    <property type="entry name" value="Nucleolus"/>
</dbReference>
<dbReference type="EvolutionaryTrace" id="Q93Z70"/>
<dbReference type="PRO" id="PR:Q93Z70"/>
<dbReference type="Proteomes" id="UP000006548">
    <property type="component" value="Chromosome 2"/>
</dbReference>
<dbReference type="ExpressionAtlas" id="Q93Z70">
    <property type="expression patterns" value="baseline and differential"/>
</dbReference>
<dbReference type="GO" id="GO:0009507">
    <property type="term" value="C:chloroplast"/>
    <property type="evidence" value="ECO:0007005"/>
    <property type="project" value="TAIR"/>
</dbReference>
<dbReference type="GO" id="GO:0009570">
    <property type="term" value="C:chloroplast stroma"/>
    <property type="evidence" value="ECO:0007005"/>
    <property type="project" value="TAIR"/>
</dbReference>
<dbReference type="GO" id="GO:0005730">
    <property type="term" value="C:nucleolus"/>
    <property type="evidence" value="ECO:0007005"/>
    <property type="project" value="TAIR"/>
</dbReference>
<dbReference type="GO" id="GO:0005507">
    <property type="term" value="F:copper ion binding"/>
    <property type="evidence" value="ECO:0007005"/>
    <property type="project" value="TAIR"/>
</dbReference>
<dbReference type="GO" id="GO:0003942">
    <property type="term" value="F:N-acetyl-gamma-glutamyl-phosphate reductase activity"/>
    <property type="evidence" value="ECO:0007669"/>
    <property type="project" value="UniProtKB-EC"/>
</dbReference>
<dbReference type="GO" id="GO:0051287">
    <property type="term" value="F:NAD binding"/>
    <property type="evidence" value="ECO:0007669"/>
    <property type="project" value="InterPro"/>
</dbReference>
<dbReference type="GO" id="GO:0070401">
    <property type="term" value="F:NADP+ binding"/>
    <property type="evidence" value="ECO:0007669"/>
    <property type="project" value="InterPro"/>
</dbReference>
<dbReference type="GO" id="GO:0006526">
    <property type="term" value="P:L-arginine biosynthetic process"/>
    <property type="evidence" value="ECO:0007669"/>
    <property type="project" value="UniProtKB-UniPathway"/>
</dbReference>
<dbReference type="CDD" id="cd23934">
    <property type="entry name" value="AGPR_1_C"/>
    <property type="match status" value="1"/>
</dbReference>
<dbReference type="CDD" id="cd17895">
    <property type="entry name" value="AGPR_1_N"/>
    <property type="match status" value="1"/>
</dbReference>
<dbReference type="FunFam" id="3.30.360.10:FF:000014">
    <property type="entry name" value="N-acetyl-gamma-glutamyl-phosphate reductase"/>
    <property type="match status" value="1"/>
</dbReference>
<dbReference type="Gene3D" id="3.30.360.10">
    <property type="entry name" value="Dihydrodipicolinate Reductase, domain 2"/>
    <property type="match status" value="1"/>
</dbReference>
<dbReference type="Gene3D" id="3.40.50.720">
    <property type="entry name" value="NAD(P)-binding Rossmann-like Domain"/>
    <property type="match status" value="1"/>
</dbReference>
<dbReference type="HAMAP" id="MF_00150">
    <property type="entry name" value="ArgC_type1"/>
    <property type="match status" value="1"/>
</dbReference>
<dbReference type="InterPro" id="IPR023013">
    <property type="entry name" value="AGPR_AS"/>
</dbReference>
<dbReference type="InterPro" id="IPR000706">
    <property type="entry name" value="AGPR_type-1"/>
</dbReference>
<dbReference type="InterPro" id="IPR036291">
    <property type="entry name" value="NAD(P)-bd_dom_sf"/>
</dbReference>
<dbReference type="InterPro" id="IPR050085">
    <property type="entry name" value="NAGSA_dehydrogenase"/>
</dbReference>
<dbReference type="InterPro" id="IPR000534">
    <property type="entry name" value="Semialdehyde_DH_NAD-bd"/>
</dbReference>
<dbReference type="NCBIfam" id="TIGR01850">
    <property type="entry name" value="argC"/>
    <property type="match status" value="1"/>
</dbReference>
<dbReference type="PANTHER" id="PTHR32338:SF10">
    <property type="entry name" value="N-ACETYL-GAMMA-GLUTAMYL-PHOSPHATE REDUCTASE, CHLOROPLASTIC-RELATED"/>
    <property type="match status" value="1"/>
</dbReference>
<dbReference type="PANTHER" id="PTHR32338">
    <property type="entry name" value="N-ACETYL-GAMMA-GLUTAMYL-PHOSPHATE REDUCTASE, CHLOROPLASTIC-RELATED-RELATED"/>
    <property type="match status" value="1"/>
</dbReference>
<dbReference type="Pfam" id="PF01118">
    <property type="entry name" value="Semialdhyde_dh"/>
    <property type="match status" value="1"/>
</dbReference>
<dbReference type="Pfam" id="PF22698">
    <property type="entry name" value="Semialdhyde_dhC_1"/>
    <property type="match status" value="1"/>
</dbReference>
<dbReference type="SMART" id="SM00859">
    <property type="entry name" value="Semialdhyde_dh"/>
    <property type="match status" value="1"/>
</dbReference>
<dbReference type="SUPFAM" id="SSF55347">
    <property type="entry name" value="Glyceraldehyde-3-phosphate dehydrogenase-like, C-terminal domain"/>
    <property type="match status" value="1"/>
</dbReference>
<dbReference type="SUPFAM" id="SSF51735">
    <property type="entry name" value="NAD(P)-binding Rossmann-fold domains"/>
    <property type="match status" value="1"/>
</dbReference>
<dbReference type="PROSITE" id="PS01224">
    <property type="entry name" value="ARGC"/>
    <property type="match status" value="1"/>
</dbReference>
<comment type="catalytic activity">
    <reaction>
        <text>N-acetyl-L-glutamate 5-semialdehyde + phosphate + NADP(+) = N-acetyl-L-glutamyl 5-phosphate + NADPH + H(+)</text>
        <dbReference type="Rhea" id="RHEA:21588"/>
        <dbReference type="ChEBI" id="CHEBI:15378"/>
        <dbReference type="ChEBI" id="CHEBI:29123"/>
        <dbReference type="ChEBI" id="CHEBI:43474"/>
        <dbReference type="ChEBI" id="CHEBI:57783"/>
        <dbReference type="ChEBI" id="CHEBI:57936"/>
        <dbReference type="ChEBI" id="CHEBI:58349"/>
        <dbReference type="EC" id="1.2.1.38"/>
    </reaction>
</comment>
<comment type="pathway">
    <text>Amino-acid biosynthesis; L-arginine biosynthesis; N(2)-acetyl-L-ornithine from L-glutamate: step 3/4.</text>
</comment>
<comment type="subunit">
    <text evidence="3">Homotetramer.</text>
</comment>
<comment type="subcellular location">
    <subcellularLocation>
        <location evidence="4">Plastid</location>
        <location evidence="4">Chloroplast</location>
    </subcellularLocation>
</comment>
<comment type="similarity">
    <text evidence="4">Belongs to the NAGSA dehydrogenase family. Type 1 subfamily.</text>
</comment>
<comment type="sequence caution" evidence="4">
    <conflict type="erroneous gene model prediction">
        <sequence resource="EMBL-CDS" id="AAC62122"/>
    </conflict>
</comment>
<sequence>MSTASAFSSIQGCWFKGERKIRVADKRAKRLTLGSHVASPSSMSFRVSASSSVKPEKDIRIGLLGASGYTGAEIVRLLANHPHFQVTLMTADRKAGQSMESVFPHLRAQKLPTLVSVKDADFSTVDAVFCCLPHGTTQEIIKELPTALKIVDLSADFRLRNIAEYEEWYGQPHKAVELQKEVVYGLTEILREDIKKARLVANPGCYPTTIQLPLVPLLKANLIKHENIIIDAKSGVSGAGRGAKEANLYSEIAEGISSYGVTRHRHVPEIEQGLSDVAQSKVTVSFTPHLMPMIRGMQSTIYVEMAPGVRTEDLHQQLKTSYEDEEFVKVLDEGVVPRTHNVRGSNYCHMSVFPDRIPGRAIIISVIDNLVKGASGQALQNLNIMLGYPETTGLLHQPLFP</sequence>
<protein>
    <recommendedName>
        <fullName>Probable N-acetyl-gamma-glutamyl-phosphate reductase, chloroplastic</fullName>
        <shortName>AGPR</shortName>
        <ecNumber>1.2.1.38</ecNumber>
    </recommendedName>
    <alternativeName>
        <fullName>N-acetyl-glutamate semialdehyde dehydrogenase</fullName>
        <shortName>NAGSA dehydrogenase</shortName>
    </alternativeName>
</protein>
<keyword id="KW-0002">3D-structure</keyword>
<keyword id="KW-0028">Amino-acid biosynthesis</keyword>
<keyword id="KW-0055">Arginine biosynthesis</keyword>
<keyword id="KW-0150">Chloroplast</keyword>
<keyword id="KW-0521">NADP</keyword>
<keyword id="KW-0560">Oxidoreductase</keyword>
<keyword id="KW-0934">Plastid</keyword>
<keyword id="KW-1185">Reference proteome</keyword>
<keyword id="KW-0809">Transit peptide</keyword>
<feature type="transit peptide" description="Chloroplast" evidence="2">
    <location>
        <begin position="1"/>
        <end position="48"/>
    </location>
</feature>
<feature type="chain" id="PRO_0000002066" description="Probable N-acetyl-gamma-glutamyl-phosphate reductase, chloroplastic">
    <location>
        <begin position="49"/>
        <end position="401"/>
    </location>
</feature>
<feature type="active site" evidence="1">
    <location>
        <position position="205"/>
    </location>
</feature>
<feature type="strand" evidence="5">
    <location>
        <begin position="59"/>
        <end position="64"/>
    </location>
</feature>
<feature type="helix" evidence="5">
    <location>
        <begin position="69"/>
        <end position="79"/>
    </location>
</feature>
<feature type="strand" evidence="5">
    <location>
        <begin position="82"/>
        <end position="90"/>
    </location>
</feature>
<feature type="turn" evidence="5">
    <location>
        <begin position="93"/>
        <end position="96"/>
    </location>
</feature>
<feature type="helix" evidence="5">
    <location>
        <begin position="99"/>
        <end position="102"/>
    </location>
</feature>
<feature type="helix" evidence="5">
    <location>
        <begin position="104"/>
        <end position="106"/>
    </location>
</feature>
<feature type="helix" evidence="5">
    <location>
        <begin position="117"/>
        <end position="119"/>
    </location>
</feature>
<feature type="helix" evidence="5">
    <location>
        <begin position="122"/>
        <end position="124"/>
    </location>
</feature>
<feature type="strand" evidence="5">
    <location>
        <begin position="126"/>
        <end position="130"/>
    </location>
</feature>
<feature type="turn" evidence="5">
    <location>
        <begin position="134"/>
        <end position="136"/>
    </location>
</feature>
<feature type="helix" evidence="5">
    <location>
        <begin position="137"/>
        <end position="142"/>
    </location>
</feature>
<feature type="strand" evidence="5">
    <location>
        <begin position="149"/>
        <end position="152"/>
    </location>
</feature>
<feature type="turn" evidence="5">
    <location>
        <begin position="156"/>
        <end position="158"/>
    </location>
</feature>
<feature type="helix" evidence="5">
    <location>
        <begin position="162"/>
        <end position="169"/>
    </location>
</feature>
<feature type="helix" evidence="5">
    <location>
        <begin position="176"/>
        <end position="179"/>
    </location>
</feature>
<feature type="helix" evidence="5">
    <location>
        <begin position="187"/>
        <end position="195"/>
    </location>
</feature>
<feature type="strand" evidence="5">
    <location>
        <begin position="198"/>
        <end position="201"/>
    </location>
</feature>
<feature type="helix" evidence="5">
    <location>
        <begin position="205"/>
        <end position="219"/>
    </location>
</feature>
<feature type="strand" evidence="5">
    <location>
        <begin position="225"/>
        <end position="227"/>
    </location>
</feature>
<feature type="strand" evidence="5">
    <location>
        <begin position="229"/>
        <end position="235"/>
    </location>
</feature>
<feature type="helix" evidence="5">
    <location>
        <begin position="236"/>
        <end position="239"/>
    </location>
</feature>
<feature type="helix" evidence="5">
    <location>
        <begin position="245"/>
        <end position="247"/>
    </location>
</feature>
<feature type="helix" evidence="5">
    <location>
        <begin position="249"/>
        <end position="252"/>
    </location>
</feature>
<feature type="helix" evidence="5">
    <location>
        <begin position="266"/>
        <end position="278"/>
    </location>
</feature>
<feature type="strand" evidence="5">
    <location>
        <begin position="285"/>
        <end position="287"/>
    </location>
</feature>
<feature type="strand" evidence="5">
    <location>
        <begin position="289"/>
        <end position="295"/>
    </location>
</feature>
<feature type="strand" evidence="5">
    <location>
        <begin position="297"/>
        <end position="305"/>
    </location>
</feature>
<feature type="helix" evidence="5">
    <location>
        <begin position="311"/>
        <end position="322"/>
    </location>
</feature>
<feature type="strand" evidence="5">
    <location>
        <begin position="326"/>
        <end position="330"/>
    </location>
</feature>
<feature type="helix" evidence="5">
    <location>
        <begin position="339"/>
        <end position="341"/>
    </location>
</feature>
<feature type="turn" evidence="5">
    <location>
        <begin position="342"/>
        <end position="344"/>
    </location>
</feature>
<feature type="strand" evidence="5">
    <location>
        <begin position="348"/>
        <end position="354"/>
    </location>
</feature>
<feature type="strand" evidence="5">
    <location>
        <begin position="360"/>
        <end position="367"/>
    </location>
</feature>
<feature type="turn" evidence="5">
    <location>
        <begin position="369"/>
        <end position="374"/>
    </location>
</feature>
<feature type="helix" evidence="5">
    <location>
        <begin position="375"/>
        <end position="385"/>
    </location>
</feature>
<feature type="turn" evidence="5">
    <location>
        <begin position="390"/>
        <end position="393"/>
    </location>
</feature>